<accession>Q81E36</accession>
<feature type="chain" id="PRO_0000271977" description="Bacilliredoxin BC_2157">
    <location>
        <begin position="1"/>
        <end position="144"/>
    </location>
</feature>
<proteinExistence type="inferred from homology"/>
<sequence>MSNAYEEYMRQMVIPMRQELVRSGFEELTTEEAVTEFMENTSGTTLVVVNSVCGCAAGLARPSAGQAVVRAEKQPDHLVTVFAGQDKDATAKMREYFGEIPPSSPSMALLKGKEVVHFIHRHEIEGATMDEIITNLEQAFEKNC</sequence>
<evidence type="ECO:0000305" key="1"/>
<dbReference type="EMBL" id="AE016877">
    <property type="protein sequence ID" value="AAP09124.1"/>
    <property type="molecule type" value="Genomic_DNA"/>
</dbReference>
<dbReference type="RefSeq" id="NP_831923.1">
    <property type="nucleotide sequence ID" value="NC_004722.1"/>
</dbReference>
<dbReference type="RefSeq" id="WP_000063706.1">
    <property type="nucleotide sequence ID" value="NZ_CP138336.1"/>
</dbReference>
<dbReference type="SMR" id="Q81E36"/>
<dbReference type="STRING" id="226900.BC_2157"/>
<dbReference type="KEGG" id="bce:BC2157"/>
<dbReference type="PATRIC" id="fig|226900.8.peg.2178"/>
<dbReference type="HOGENOM" id="CLU_132521_0_0_9"/>
<dbReference type="OrthoDB" id="9793981at2"/>
<dbReference type="Proteomes" id="UP000001417">
    <property type="component" value="Chromosome"/>
</dbReference>
<dbReference type="GO" id="GO:0045454">
    <property type="term" value="P:cell redox homeostasis"/>
    <property type="evidence" value="ECO:0000250"/>
    <property type="project" value="UniProtKB"/>
</dbReference>
<dbReference type="Gene3D" id="6.10.250.2150">
    <property type="match status" value="1"/>
</dbReference>
<dbReference type="Gene3D" id="3.40.30.10">
    <property type="entry name" value="Glutaredoxin"/>
    <property type="match status" value="1"/>
</dbReference>
<dbReference type="InterPro" id="IPR009474">
    <property type="entry name" value="BrxB/BrxA"/>
</dbReference>
<dbReference type="NCBIfam" id="TIGR04191">
    <property type="entry name" value="YphP_YqiW"/>
    <property type="match status" value="1"/>
</dbReference>
<dbReference type="PANTHER" id="PTHR40052:SF2">
    <property type="entry name" value="BACILLIREDOXIN BRXA"/>
    <property type="match status" value="1"/>
</dbReference>
<dbReference type="PANTHER" id="PTHR40052">
    <property type="entry name" value="UPF0403 PROTEIN YQIW-RELATED"/>
    <property type="match status" value="1"/>
</dbReference>
<dbReference type="Pfam" id="PF06491">
    <property type="entry name" value="Disulph_isomer"/>
    <property type="match status" value="1"/>
</dbReference>
<comment type="similarity">
    <text evidence="1">Belongs to the bacilliredoxin family.</text>
</comment>
<reference key="1">
    <citation type="journal article" date="2003" name="Nature">
        <title>Genome sequence of Bacillus cereus and comparative analysis with Bacillus anthracis.</title>
        <authorList>
            <person name="Ivanova N."/>
            <person name="Sorokin A."/>
            <person name="Anderson I."/>
            <person name="Galleron N."/>
            <person name="Candelon B."/>
            <person name="Kapatral V."/>
            <person name="Bhattacharyya A."/>
            <person name="Reznik G."/>
            <person name="Mikhailova N."/>
            <person name="Lapidus A."/>
            <person name="Chu L."/>
            <person name="Mazur M."/>
            <person name="Goltsman E."/>
            <person name="Larsen N."/>
            <person name="D'Souza M."/>
            <person name="Walunas T."/>
            <person name="Grechkin Y."/>
            <person name="Pusch G."/>
            <person name="Haselkorn R."/>
            <person name="Fonstein M."/>
            <person name="Ehrlich S.D."/>
            <person name="Overbeek R."/>
            <person name="Kyrpides N.C."/>
        </authorList>
    </citation>
    <scope>NUCLEOTIDE SEQUENCE [LARGE SCALE GENOMIC DNA]</scope>
    <source>
        <strain>ATCC 14579 / DSM 31 / CCUG 7414 / JCM 2152 / NBRC 15305 / NCIMB 9373 / NCTC 2599 / NRRL B-3711</strain>
    </source>
</reference>
<name>Y2157_BACCR</name>
<protein>
    <recommendedName>
        <fullName evidence="1">Bacilliredoxin BC_2157</fullName>
    </recommendedName>
</protein>
<gene>
    <name type="ordered locus">BC_2157</name>
</gene>
<keyword id="KW-1185">Reference proteome</keyword>
<organism>
    <name type="scientific">Bacillus cereus (strain ATCC 14579 / DSM 31 / CCUG 7414 / JCM 2152 / NBRC 15305 / NCIMB 9373 / NCTC 2599 / NRRL B-3711)</name>
    <dbReference type="NCBI Taxonomy" id="226900"/>
    <lineage>
        <taxon>Bacteria</taxon>
        <taxon>Bacillati</taxon>
        <taxon>Bacillota</taxon>
        <taxon>Bacilli</taxon>
        <taxon>Bacillales</taxon>
        <taxon>Bacillaceae</taxon>
        <taxon>Bacillus</taxon>
        <taxon>Bacillus cereus group</taxon>
    </lineage>
</organism>